<comment type="function">
    <text evidence="2">Involved in the regulation of the TOR signaling pathway. Seems to act as a regulator of PP2A catalytic activity.</text>
</comment>
<comment type="subunit">
    <text>Interacts with NPP4 and NPP5, two catalytic subunits (subunit C) of PP2A.</text>
</comment>
<comment type="subcellular location">
    <subcellularLocation>
        <location evidence="2">Cytoplasm</location>
    </subcellularLocation>
    <subcellularLocation>
        <location evidence="2">Nucleus</location>
    </subcellularLocation>
</comment>
<comment type="disruption phenotype">
    <text evidence="2">RNAi plants show severe growth retardation, the formation of spontaneous disease-like nectrotic lesions leading to premature cell death. The defective plants also display a strong reduction in protein synthesis, the induction of autophagy and nitrogen mobilization.</text>
</comment>
<comment type="similarity">
    <text evidence="4">Belongs to the IGBP1/TAP42 family.</text>
</comment>
<organism>
    <name type="scientific">Nicotiana benthamiana</name>
    <dbReference type="NCBI Taxonomy" id="4100"/>
    <lineage>
        <taxon>Eukaryota</taxon>
        <taxon>Viridiplantae</taxon>
        <taxon>Streptophyta</taxon>
        <taxon>Embryophyta</taxon>
        <taxon>Tracheophyta</taxon>
        <taxon>Spermatophyta</taxon>
        <taxon>Magnoliopsida</taxon>
        <taxon>eudicotyledons</taxon>
        <taxon>Gunneridae</taxon>
        <taxon>Pentapetalae</taxon>
        <taxon>asterids</taxon>
        <taxon>lamiids</taxon>
        <taxon>Solanales</taxon>
        <taxon>Solanaceae</taxon>
        <taxon>Nicotianoideae</taxon>
        <taxon>Nicotianeae</taxon>
        <taxon>Nicotiana</taxon>
    </lineage>
</organism>
<name>TAP46_NICBE</name>
<evidence type="ECO:0000256" key="1">
    <source>
        <dbReference type="SAM" id="MobiDB-lite"/>
    </source>
</evidence>
<evidence type="ECO:0000269" key="2">
    <source>
    </source>
</evidence>
<evidence type="ECO:0000303" key="3">
    <source>
    </source>
</evidence>
<evidence type="ECO:0000305" key="4"/>
<evidence type="ECO:0000312" key="5">
    <source>
        <dbReference type="EMBL" id="ACZ65511.1"/>
    </source>
</evidence>
<feature type="chain" id="PRO_0000440566" description="PP2A regulatory subunit TAP46">
    <location>
        <begin position="1"/>
        <end position="403"/>
    </location>
</feature>
<feature type="region of interest" description="Disordered" evidence="1">
    <location>
        <begin position="158"/>
        <end position="184"/>
    </location>
</feature>
<feature type="region of interest" description="Disordered" evidence="1">
    <location>
        <begin position="351"/>
        <end position="403"/>
    </location>
</feature>
<feature type="compositionally biased region" description="Acidic residues" evidence="1">
    <location>
        <begin position="174"/>
        <end position="184"/>
    </location>
</feature>
<feature type="compositionally biased region" description="Acidic residues" evidence="1">
    <location>
        <begin position="366"/>
        <end position="375"/>
    </location>
</feature>
<feature type="compositionally biased region" description="Basic and acidic residues" evidence="1">
    <location>
        <begin position="376"/>
        <end position="391"/>
    </location>
</feature>
<dbReference type="EMBL" id="GU189242">
    <property type="protein sequence ID" value="ACZ65511.1"/>
    <property type="molecule type" value="mRNA"/>
</dbReference>
<dbReference type="SMR" id="D2K8N5"/>
<dbReference type="GO" id="GO:0005737">
    <property type="term" value="C:cytoplasm"/>
    <property type="evidence" value="ECO:0000314"/>
    <property type="project" value="UniProtKB"/>
</dbReference>
<dbReference type="GO" id="GO:0005829">
    <property type="term" value="C:cytosol"/>
    <property type="evidence" value="ECO:0007669"/>
    <property type="project" value="TreeGrafter"/>
</dbReference>
<dbReference type="GO" id="GO:0005634">
    <property type="term" value="C:nucleus"/>
    <property type="evidence" value="ECO:0000314"/>
    <property type="project" value="UniProtKB"/>
</dbReference>
<dbReference type="GO" id="GO:0051721">
    <property type="term" value="F:protein phosphatase 2A binding"/>
    <property type="evidence" value="ECO:0007669"/>
    <property type="project" value="TreeGrafter"/>
</dbReference>
<dbReference type="GO" id="GO:0035303">
    <property type="term" value="P:regulation of dephosphorylation"/>
    <property type="evidence" value="ECO:0007669"/>
    <property type="project" value="TreeGrafter"/>
</dbReference>
<dbReference type="GO" id="GO:0009966">
    <property type="term" value="P:regulation of signal transduction"/>
    <property type="evidence" value="ECO:0007669"/>
    <property type="project" value="InterPro"/>
</dbReference>
<dbReference type="GO" id="GO:0031929">
    <property type="term" value="P:TOR signaling"/>
    <property type="evidence" value="ECO:0000315"/>
    <property type="project" value="UniProtKB"/>
</dbReference>
<dbReference type="FunFam" id="1.25.40.540:FF:000002">
    <property type="entry name" value="PP2A regulatory subunit TAP46"/>
    <property type="match status" value="1"/>
</dbReference>
<dbReference type="Gene3D" id="1.25.40.540">
    <property type="entry name" value="TAP42-like family"/>
    <property type="match status" value="1"/>
</dbReference>
<dbReference type="InterPro" id="IPR038511">
    <property type="entry name" value="TAP42/TAP46-like_sf"/>
</dbReference>
<dbReference type="InterPro" id="IPR007304">
    <property type="entry name" value="TAP46-like"/>
</dbReference>
<dbReference type="PANTHER" id="PTHR10933">
    <property type="entry name" value="IMMUNOGLOBULIN-BINDING PROTEIN 1"/>
    <property type="match status" value="1"/>
</dbReference>
<dbReference type="PANTHER" id="PTHR10933:SF16">
    <property type="entry name" value="PP2A REGULATORY SUBUNIT TAP46"/>
    <property type="match status" value="1"/>
</dbReference>
<dbReference type="Pfam" id="PF04177">
    <property type="entry name" value="TAP42"/>
    <property type="match status" value="1"/>
</dbReference>
<proteinExistence type="evidence at protein level"/>
<accession>D2K8N5</accession>
<protein>
    <recommendedName>
        <fullName evidence="3">PP2A regulatory subunit TAP46</fullName>
        <shortName evidence="3">NbTAP46</shortName>
    </recommendedName>
</protein>
<sequence>MGELSMQEMPLPALFEQGSKIHASAESSVDQDTVRKGCEILRQCEEMIGKLGLFSVNETKEDISTANLKYILVPYYLAELTEKVADNDRIKVLKASQAKLKEFISFCETMELVPEEEIETSTQGGANSSVDRRAKKIARFKRQRAAESKLLEIKERKERRGRSTKAAALSSPVETEEDDVLDDDGEEEREAWLTTISLGLCKAFDLLEMLKKEEEILSAVKEKQLQNGEKEFSQAILDERTKKVETWHRDAAARAHYTKPAAPITCATFAQDVIEGRAKVSQAHEHKHQPLIFGPASLVGRNPTTEREKIAAQVFQPHYRLPTMSIEEAGLTEMNMMNEWQERNVKLMEEANSSWYKDAPKSRPGEDDEEDDDDAAQDKARAWDDWKDDNPRGAGNKKLTPCG</sequence>
<keyword id="KW-0963">Cytoplasm</keyword>
<keyword id="KW-0539">Nucleus</keyword>
<gene>
    <name evidence="5" type="primary">TAP46</name>
</gene>
<reference key="1">
    <citation type="submission" date="2009-11" db="EMBL/GenBank/DDBJ databases">
        <authorList>
            <person name="Pai H.-S."/>
        </authorList>
    </citation>
    <scope>NUCLEOTIDE SEQUENCE [MRNA]</scope>
</reference>
<reference key="2">
    <citation type="journal article" date="2011" name="Plant Cell">
        <title>The PP2A regulatory subunit Tap46, a component of the TOR signaling pathway, modulates growth and metabolism in plants.</title>
        <authorList>
            <person name="Ahn C.S."/>
            <person name="Han J.-A."/>
            <person name="Lee H.-S."/>
            <person name="Lee S."/>
            <person name="Pai H.-S."/>
        </authorList>
    </citation>
    <scope>DISRUPTION PHENOTYPE</scope>
    <scope>INTERACTION WITH NPP4 AND NPP5</scope>
    <scope>SUBCELLULAR LOCATION</scope>
    <scope>FUNCTION</scope>
</reference>
<reference key="3">
    <citation type="journal article" date="2011" name="Plant Signal. Behav.">
        <title>Molecular functions of the PP2A regulatory subunit Tap46 in plants.</title>
        <authorList>
            <person name="Ahn C.S."/>
            <person name="Lee H.S."/>
            <person name="Pai H.S."/>
        </authorList>
    </citation>
    <scope>ADDENDUM</scope>
</reference>